<comment type="function">
    <text evidence="1">Phosphorylation of dTMP to form dTDP in both de novo and salvage pathways of dTTP synthesis.</text>
</comment>
<comment type="catalytic activity">
    <reaction evidence="1">
        <text>dTMP + ATP = dTDP + ADP</text>
        <dbReference type="Rhea" id="RHEA:13517"/>
        <dbReference type="ChEBI" id="CHEBI:30616"/>
        <dbReference type="ChEBI" id="CHEBI:58369"/>
        <dbReference type="ChEBI" id="CHEBI:63528"/>
        <dbReference type="ChEBI" id="CHEBI:456216"/>
        <dbReference type="EC" id="2.7.4.9"/>
    </reaction>
</comment>
<comment type="similarity">
    <text evidence="1">Belongs to the thymidylate kinase family.</text>
</comment>
<gene>
    <name evidence="1" type="primary">tmk</name>
    <name type="ordered locus">SYO3AOP1_0400</name>
</gene>
<evidence type="ECO:0000255" key="1">
    <source>
        <dbReference type="HAMAP-Rule" id="MF_00165"/>
    </source>
</evidence>
<dbReference type="EC" id="2.7.4.9" evidence="1"/>
<dbReference type="EMBL" id="CP001080">
    <property type="protein sequence ID" value="ACD66043.1"/>
    <property type="molecule type" value="Genomic_DNA"/>
</dbReference>
<dbReference type="RefSeq" id="WP_012459125.1">
    <property type="nucleotide sequence ID" value="NC_010730.1"/>
</dbReference>
<dbReference type="SMR" id="B2V7X0"/>
<dbReference type="STRING" id="436114.SYO3AOP1_0400"/>
<dbReference type="KEGG" id="sul:SYO3AOP1_0400"/>
<dbReference type="eggNOG" id="COG0125">
    <property type="taxonomic scope" value="Bacteria"/>
</dbReference>
<dbReference type="HOGENOM" id="CLU_049131_0_2_0"/>
<dbReference type="GO" id="GO:0005829">
    <property type="term" value="C:cytosol"/>
    <property type="evidence" value="ECO:0007669"/>
    <property type="project" value="TreeGrafter"/>
</dbReference>
<dbReference type="GO" id="GO:0005524">
    <property type="term" value="F:ATP binding"/>
    <property type="evidence" value="ECO:0007669"/>
    <property type="project" value="UniProtKB-UniRule"/>
</dbReference>
<dbReference type="GO" id="GO:0004798">
    <property type="term" value="F:dTMP kinase activity"/>
    <property type="evidence" value="ECO:0007669"/>
    <property type="project" value="UniProtKB-UniRule"/>
</dbReference>
<dbReference type="GO" id="GO:0006233">
    <property type="term" value="P:dTDP biosynthetic process"/>
    <property type="evidence" value="ECO:0007669"/>
    <property type="project" value="InterPro"/>
</dbReference>
<dbReference type="GO" id="GO:0006235">
    <property type="term" value="P:dTTP biosynthetic process"/>
    <property type="evidence" value="ECO:0007669"/>
    <property type="project" value="UniProtKB-UniRule"/>
</dbReference>
<dbReference type="GO" id="GO:0006227">
    <property type="term" value="P:dUDP biosynthetic process"/>
    <property type="evidence" value="ECO:0007669"/>
    <property type="project" value="TreeGrafter"/>
</dbReference>
<dbReference type="CDD" id="cd01672">
    <property type="entry name" value="TMPK"/>
    <property type="match status" value="1"/>
</dbReference>
<dbReference type="FunFam" id="3.40.50.300:FF:000225">
    <property type="entry name" value="Thymidylate kinase"/>
    <property type="match status" value="1"/>
</dbReference>
<dbReference type="Gene3D" id="3.40.50.300">
    <property type="entry name" value="P-loop containing nucleotide triphosphate hydrolases"/>
    <property type="match status" value="1"/>
</dbReference>
<dbReference type="HAMAP" id="MF_00165">
    <property type="entry name" value="Thymidylate_kinase"/>
    <property type="match status" value="1"/>
</dbReference>
<dbReference type="InterPro" id="IPR027417">
    <property type="entry name" value="P-loop_NTPase"/>
</dbReference>
<dbReference type="InterPro" id="IPR039430">
    <property type="entry name" value="Thymidylate_kin-like_dom"/>
</dbReference>
<dbReference type="InterPro" id="IPR018095">
    <property type="entry name" value="Thymidylate_kin_CS"/>
</dbReference>
<dbReference type="InterPro" id="IPR018094">
    <property type="entry name" value="Thymidylate_kinase"/>
</dbReference>
<dbReference type="NCBIfam" id="TIGR00041">
    <property type="entry name" value="DTMP_kinase"/>
    <property type="match status" value="1"/>
</dbReference>
<dbReference type="PANTHER" id="PTHR10344">
    <property type="entry name" value="THYMIDYLATE KINASE"/>
    <property type="match status" value="1"/>
</dbReference>
<dbReference type="PANTHER" id="PTHR10344:SF4">
    <property type="entry name" value="UMP-CMP KINASE 2, MITOCHONDRIAL"/>
    <property type="match status" value="1"/>
</dbReference>
<dbReference type="Pfam" id="PF02223">
    <property type="entry name" value="Thymidylate_kin"/>
    <property type="match status" value="1"/>
</dbReference>
<dbReference type="SUPFAM" id="SSF52540">
    <property type="entry name" value="P-loop containing nucleoside triphosphate hydrolases"/>
    <property type="match status" value="1"/>
</dbReference>
<dbReference type="PROSITE" id="PS01331">
    <property type="entry name" value="THYMIDYLATE_KINASE"/>
    <property type="match status" value="1"/>
</dbReference>
<organism>
    <name type="scientific">Sulfurihydrogenibium sp. (strain YO3AOP1)</name>
    <dbReference type="NCBI Taxonomy" id="436114"/>
    <lineage>
        <taxon>Bacteria</taxon>
        <taxon>Pseudomonadati</taxon>
        <taxon>Aquificota</taxon>
        <taxon>Aquificia</taxon>
        <taxon>Aquificales</taxon>
        <taxon>Hydrogenothermaceae</taxon>
        <taxon>Sulfurihydrogenibium</taxon>
    </lineage>
</organism>
<proteinExistence type="inferred from homology"/>
<accession>B2V7X0</accession>
<sequence length="204" mass="23437">MGFFITFEGIEASGKTTQINLLYDYLKSIGKNVIKTREPGGTKIGQKIREILLSKWDEKFPYIAELLLYESDRNIHIQSIVKPSLDAGYIVLSDRYIDSTTAYQHYARGIDYEIVSYLNTLATDGLKPNLTFLIDIPVEISLKRLSESKDRIESEDIEFHKKLREGFLKIAENEKGRFVVIDGTMDIMEIHKIIVDSLKQRSII</sequence>
<name>KTHY_SULSY</name>
<keyword id="KW-0067">ATP-binding</keyword>
<keyword id="KW-0418">Kinase</keyword>
<keyword id="KW-0545">Nucleotide biosynthesis</keyword>
<keyword id="KW-0547">Nucleotide-binding</keyword>
<keyword id="KW-0808">Transferase</keyword>
<feature type="chain" id="PRO_1000097435" description="Thymidylate kinase">
    <location>
        <begin position="1"/>
        <end position="204"/>
    </location>
</feature>
<feature type="binding site" evidence="1">
    <location>
        <begin position="9"/>
        <end position="16"/>
    </location>
    <ligand>
        <name>ATP</name>
        <dbReference type="ChEBI" id="CHEBI:30616"/>
    </ligand>
</feature>
<reference key="1">
    <citation type="journal article" date="2009" name="J. Bacteriol.">
        <title>Complete and draft genome sequences of six members of the Aquificales.</title>
        <authorList>
            <person name="Reysenbach A.-L."/>
            <person name="Hamamura N."/>
            <person name="Podar M."/>
            <person name="Griffiths E."/>
            <person name="Ferreira S."/>
            <person name="Hochstein R."/>
            <person name="Heidelberg J."/>
            <person name="Johnson J."/>
            <person name="Mead D."/>
            <person name="Pohorille A."/>
            <person name="Sarmiento M."/>
            <person name="Schweighofer K."/>
            <person name="Seshadri R."/>
            <person name="Voytek M.A."/>
        </authorList>
    </citation>
    <scope>NUCLEOTIDE SEQUENCE [LARGE SCALE GENOMIC DNA]</scope>
    <source>
        <strain>YO3AOP1</strain>
    </source>
</reference>
<protein>
    <recommendedName>
        <fullName evidence="1">Thymidylate kinase</fullName>
        <ecNumber evidence="1">2.7.4.9</ecNumber>
    </recommendedName>
    <alternativeName>
        <fullName evidence="1">dTMP kinase</fullName>
    </alternativeName>
</protein>